<protein>
    <recommendedName>
        <fullName evidence="1">Ribosome-binding factor A</fullName>
    </recommendedName>
</protein>
<comment type="function">
    <text evidence="1">One of several proteins that assist in the late maturation steps of the functional core of the 30S ribosomal subunit. Associates with free 30S ribosomal subunits (but not with 30S subunits that are part of 70S ribosomes or polysomes). Required for efficient processing of 16S rRNA. May interact with the 5'-terminal helix region of 16S rRNA.</text>
</comment>
<comment type="subunit">
    <text evidence="1">Monomer. Binds 30S ribosomal subunits, but not 50S ribosomal subunits or 70S ribosomes.</text>
</comment>
<comment type="subcellular location">
    <subcellularLocation>
        <location evidence="1">Cytoplasm</location>
    </subcellularLocation>
</comment>
<comment type="similarity">
    <text evidence="1">Belongs to the RbfA family.</text>
</comment>
<sequence>MAKEFGRPQRVAQEMQKEIALILQREIKDPRLGMMTTVSGVEMSRDLAYAKVYVTFLNDKDEDAVKAGIKALQEASGFIRSLLGKAMRLRIVPELTFFYDNSLVEGMRMSNLVTSVVKHDEERRVNPDDSKED</sequence>
<accession>Q0TCU2</accession>
<reference key="1">
    <citation type="journal article" date="2006" name="Mol. Microbiol.">
        <title>Role of pathogenicity island-associated integrases in the genome plasticity of uropathogenic Escherichia coli strain 536.</title>
        <authorList>
            <person name="Hochhut B."/>
            <person name="Wilde C."/>
            <person name="Balling G."/>
            <person name="Middendorf B."/>
            <person name="Dobrindt U."/>
            <person name="Brzuszkiewicz E."/>
            <person name="Gottschalk G."/>
            <person name="Carniel E."/>
            <person name="Hacker J."/>
        </authorList>
    </citation>
    <scope>NUCLEOTIDE SEQUENCE [LARGE SCALE GENOMIC DNA]</scope>
    <source>
        <strain>536 / UPEC</strain>
    </source>
</reference>
<keyword id="KW-0963">Cytoplasm</keyword>
<keyword id="KW-0690">Ribosome biogenesis</keyword>
<feature type="chain" id="PRO_1000000105" description="Ribosome-binding factor A">
    <location>
        <begin position="1"/>
        <end position="133"/>
    </location>
</feature>
<proteinExistence type="inferred from homology"/>
<name>RBFA_ECOL5</name>
<organism>
    <name type="scientific">Escherichia coli O6:K15:H31 (strain 536 / UPEC)</name>
    <dbReference type="NCBI Taxonomy" id="362663"/>
    <lineage>
        <taxon>Bacteria</taxon>
        <taxon>Pseudomonadati</taxon>
        <taxon>Pseudomonadota</taxon>
        <taxon>Gammaproteobacteria</taxon>
        <taxon>Enterobacterales</taxon>
        <taxon>Enterobacteriaceae</taxon>
        <taxon>Escherichia</taxon>
    </lineage>
</organism>
<evidence type="ECO:0000255" key="1">
    <source>
        <dbReference type="HAMAP-Rule" id="MF_00003"/>
    </source>
</evidence>
<gene>
    <name evidence="1" type="primary">rbfA</name>
    <name type="ordered locus">ECP_3255</name>
</gene>
<dbReference type="EMBL" id="CP000247">
    <property type="protein sequence ID" value="ABG71237.1"/>
    <property type="molecule type" value="Genomic_DNA"/>
</dbReference>
<dbReference type="RefSeq" id="WP_001040205.1">
    <property type="nucleotide sequence ID" value="NC_008253.1"/>
</dbReference>
<dbReference type="SMR" id="Q0TCU2"/>
<dbReference type="GeneID" id="93778816"/>
<dbReference type="KEGG" id="ecp:ECP_3255"/>
<dbReference type="HOGENOM" id="CLU_089475_5_0_6"/>
<dbReference type="Proteomes" id="UP000009182">
    <property type="component" value="Chromosome"/>
</dbReference>
<dbReference type="GO" id="GO:0005829">
    <property type="term" value="C:cytosol"/>
    <property type="evidence" value="ECO:0007669"/>
    <property type="project" value="TreeGrafter"/>
</dbReference>
<dbReference type="GO" id="GO:0043024">
    <property type="term" value="F:ribosomal small subunit binding"/>
    <property type="evidence" value="ECO:0007669"/>
    <property type="project" value="TreeGrafter"/>
</dbReference>
<dbReference type="GO" id="GO:0030490">
    <property type="term" value="P:maturation of SSU-rRNA"/>
    <property type="evidence" value="ECO:0007669"/>
    <property type="project" value="UniProtKB-UniRule"/>
</dbReference>
<dbReference type="FunFam" id="3.30.300.20:FF:000007">
    <property type="entry name" value="Ribosome-binding factor A"/>
    <property type="match status" value="1"/>
</dbReference>
<dbReference type="Gene3D" id="3.30.300.20">
    <property type="match status" value="1"/>
</dbReference>
<dbReference type="HAMAP" id="MF_00003">
    <property type="entry name" value="RbfA"/>
    <property type="match status" value="1"/>
</dbReference>
<dbReference type="InterPro" id="IPR015946">
    <property type="entry name" value="KH_dom-like_a/b"/>
</dbReference>
<dbReference type="InterPro" id="IPR000238">
    <property type="entry name" value="RbfA"/>
</dbReference>
<dbReference type="InterPro" id="IPR023799">
    <property type="entry name" value="RbfA_dom_sf"/>
</dbReference>
<dbReference type="InterPro" id="IPR020053">
    <property type="entry name" value="Ribosome-bd_factorA_CS"/>
</dbReference>
<dbReference type="NCBIfam" id="TIGR00082">
    <property type="entry name" value="rbfA"/>
    <property type="match status" value="1"/>
</dbReference>
<dbReference type="PANTHER" id="PTHR33515">
    <property type="entry name" value="RIBOSOME-BINDING FACTOR A, CHLOROPLASTIC-RELATED"/>
    <property type="match status" value="1"/>
</dbReference>
<dbReference type="PANTHER" id="PTHR33515:SF1">
    <property type="entry name" value="RIBOSOME-BINDING FACTOR A, CHLOROPLASTIC-RELATED"/>
    <property type="match status" value="1"/>
</dbReference>
<dbReference type="Pfam" id="PF02033">
    <property type="entry name" value="RBFA"/>
    <property type="match status" value="1"/>
</dbReference>
<dbReference type="SUPFAM" id="SSF89919">
    <property type="entry name" value="Ribosome-binding factor A, RbfA"/>
    <property type="match status" value="1"/>
</dbReference>
<dbReference type="PROSITE" id="PS01319">
    <property type="entry name" value="RBFA"/>
    <property type="match status" value="1"/>
</dbReference>